<organism>
    <name type="scientific">Aquifex aeolicus (strain VF5)</name>
    <dbReference type="NCBI Taxonomy" id="224324"/>
    <lineage>
        <taxon>Bacteria</taxon>
        <taxon>Pseudomonadati</taxon>
        <taxon>Aquificota</taxon>
        <taxon>Aquificia</taxon>
        <taxon>Aquificales</taxon>
        <taxon>Aquificaceae</taxon>
        <taxon>Aquifex</taxon>
    </lineage>
</organism>
<sequence>MGDMGILETLVLKEKINGTEKAVIFRELIKKEMELLNDYCAKNHLFPKDYRIEFCHLHNIKKVNIARLLTILKYYDPRFIEILMSTDPKVRTFIQYFMEFLEKHPYFEDVLEPQNLFGNWDYIRYKLKILFPQLTFEEIDRFKFKRKEFINYVKEKLGEPEELIEDKLNLATWYESVPYLELESEMTPGVHPDPVMTPEEWSFIKRHIKGRKNIIIRDPDTGKEKLVYVEVDIPDEELDKYYKNREGLKKLLMERYNIDESGAEQILRKAGWEATGWHIVPPVHTDVEVVYPEEEKKEEKKVEVKREPFDIMELAKHIRYLGGRELEMLNYYELVHDKVPEIHEKLHMFMRTKRRLLGKLFGIYYTVDPVMAEAILINDPENIELLKSLTISTGLRDKKFSIYDSSKVWNEIKRRVRFIFPEVSEEEIEKFKGKRSEFVTYLAQKLGKPEEYIDERLERAGWLRSEEIPAFIRHVGP</sequence>
<keyword id="KW-1185">Reference proteome</keyword>
<proteinExistence type="predicted"/>
<reference key="1">
    <citation type="journal article" date="1998" name="Nature">
        <title>The complete genome of the hyperthermophilic bacterium Aquifex aeolicus.</title>
        <authorList>
            <person name="Deckert G."/>
            <person name="Warren P.V."/>
            <person name="Gaasterland T."/>
            <person name="Young W.G."/>
            <person name="Lenox A.L."/>
            <person name="Graham D.E."/>
            <person name="Overbeek R."/>
            <person name="Snead M.A."/>
            <person name="Keller M."/>
            <person name="Aujay M."/>
            <person name="Huber R."/>
            <person name="Feldman R.A."/>
            <person name="Short J.M."/>
            <person name="Olsen G.J."/>
            <person name="Swanson R.V."/>
        </authorList>
    </citation>
    <scope>NUCLEOTIDE SEQUENCE [LARGE SCALE GENOMIC DNA]</scope>
    <source>
        <strain>VF5</strain>
    </source>
</reference>
<dbReference type="EMBL" id="AE000657">
    <property type="protein sequence ID" value="AAC07470.1"/>
    <property type="molecule type" value="Genomic_DNA"/>
</dbReference>
<dbReference type="PIR" id="A70434">
    <property type="entry name" value="A70434"/>
</dbReference>
<dbReference type="RefSeq" id="NP_214064.1">
    <property type="nucleotide sequence ID" value="NC_000918.1"/>
</dbReference>
<dbReference type="SMR" id="O67499"/>
<dbReference type="STRING" id="224324.aq_1545"/>
<dbReference type="EnsemblBacteria" id="AAC07470">
    <property type="protein sequence ID" value="AAC07470"/>
    <property type="gene ID" value="aq_1545"/>
</dbReference>
<dbReference type="KEGG" id="aae:aq_1545"/>
<dbReference type="PATRIC" id="fig|224324.8.peg.1198"/>
<dbReference type="HOGENOM" id="CLU_581282_0_0_0"/>
<dbReference type="InParanoid" id="O67499"/>
<dbReference type="OrthoDB" id="9444at2"/>
<dbReference type="Proteomes" id="UP000000798">
    <property type="component" value="Chromosome"/>
</dbReference>
<dbReference type="Gene3D" id="1.10.1470.10">
    <property type="entry name" value="YjbJ"/>
    <property type="match status" value="2"/>
</dbReference>
<dbReference type="InterPro" id="IPR036629">
    <property type="entry name" value="YjbJ_sf"/>
</dbReference>
<name>Y1545_AQUAE</name>
<protein>
    <recommendedName>
        <fullName>Uncharacterized protein aq_1545</fullName>
    </recommendedName>
</protein>
<gene>
    <name type="ordered locus">aq_1545</name>
</gene>
<feature type="chain" id="PRO_0000186934" description="Uncharacterized protein aq_1545">
    <location>
        <begin position="1"/>
        <end position="477"/>
    </location>
</feature>
<accession>O67499</accession>